<dbReference type="EMBL" id="CP000086">
    <property type="protein sequence ID" value="ABC38985.1"/>
    <property type="status" value="ALT_INIT"/>
    <property type="molecule type" value="Genomic_DNA"/>
</dbReference>
<dbReference type="RefSeq" id="WP_009891499.1">
    <property type="nucleotide sequence ID" value="NZ_CP008785.1"/>
</dbReference>
<dbReference type="SMR" id="Q2SVG9"/>
<dbReference type="GeneID" id="45122272"/>
<dbReference type="KEGG" id="bte:BTH_I2563"/>
<dbReference type="HOGENOM" id="CLU_089475_5_1_4"/>
<dbReference type="Proteomes" id="UP000001930">
    <property type="component" value="Chromosome I"/>
</dbReference>
<dbReference type="GO" id="GO:0005829">
    <property type="term" value="C:cytosol"/>
    <property type="evidence" value="ECO:0007669"/>
    <property type="project" value="TreeGrafter"/>
</dbReference>
<dbReference type="GO" id="GO:0043024">
    <property type="term" value="F:ribosomal small subunit binding"/>
    <property type="evidence" value="ECO:0007669"/>
    <property type="project" value="TreeGrafter"/>
</dbReference>
<dbReference type="GO" id="GO:0030490">
    <property type="term" value="P:maturation of SSU-rRNA"/>
    <property type="evidence" value="ECO:0007669"/>
    <property type="project" value="UniProtKB-UniRule"/>
</dbReference>
<dbReference type="Gene3D" id="3.30.300.20">
    <property type="match status" value="1"/>
</dbReference>
<dbReference type="HAMAP" id="MF_00003">
    <property type="entry name" value="RbfA"/>
    <property type="match status" value="1"/>
</dbReference>
<dbReference type="InterPro" id="IPR015946">
    <property type="entry name" value="KH_dom-like_a/b"/>
</dbReference>
<dbReference type="InterPro" id="IPR000238">
    <property type="entry name" value="RbfA"/>
</dbReference>
<dbReference type="InterPro" id="IPR023799">
    <property type="entry name" value="RbfA_dom_sf"/>
</dbReference>
<dbReference type="NCBIfam" id="TIGR00082">
    <property type="entry name" value="rbfA"/>
    <property type="match status" value="1"/>
</dbReference>
<dbReference type="PANTHER" id="PTHR33515">
    <property type="entry name" value="RIBOSOME-BINDING FACTOR A, CHLOROPLASTIC-RELATED"/>
    <property type="match status" value="1"/>
</dbReference>
<dbReference type="PANTHER" id="PTHR33515:SF1">
    <property type="entry name" value="RIBOSOME-BINDING FACTOR A, CHLOROPLASTIC-RELATED"/>
    <property type="match status" value="1"/>
</dbReference>
<dbReference type="Pfam" id="PF02033">
    <property type="entry name" value="RBFA"/>
    <property type="match status" value="1"/>
</dbReference>
<dbReference type="SUPFAM" id="SSF89919">
    <property type="entry name" value="Ribosome-binding factor A, RbfA"/>
    <property type="match status" value="1"/>
</dbReference>
<keyword id="KW-0963">Cytoplasm</keyword>
<keyword id="KW-0690">Ribosome biogenesis</keyword>
<proteinExistence type="inferred from homology"/>
<sequence>MSKKRSSPNRNVQIADQIQRDLSELIMREVKDPRIGIVTIQSVELTPDYAHAKVYFTALTGNPADTQEALNHAAGHLHNLLFKRLHIHTVPTLHFHYDQTIEKAVAMSRLIDEANATRAKDD</sequence>
<accession>Q2SVG9</accession>
<reference key="1">
    <citation type="journal article" date="2005" name="BMC Genomics">
        <title>Bacterial genome adaptation to niches: divergence of the potential virulence genes in three Burkholderia species of different survival strategies.</title>
        <authorList>
            <person name="Kim H.S."/>
            <person name="Schell M.A."/>
            <person name="Yu Y."/>
            <person name="Ulrich R.L."/>
            <person name="Sarria S.H."/>
            <person name="Nierman W.C."/>
            <person name="DeShazer D."/>
        </authorList>
    </citation>
    <scope>NUCLEOTIDE SEQUENCE [LARGE SCALE GENOMIC DNA]</scope>
    <source>
        <strain>ATCC 700388 / DSM 13276 / CCUG 48851 / CIP 106301 / E264</strain>
    </source>
</reference>
<evidence type="ECO:0000255" key="1">
    <source>
        <dbReference type="HAMAP-Rule" id="MF_00003"/>
    </source>
</evidence>
<evidence type="ECO:0000305" key="2"/>
<protein>
    <recommendedName>
        <fullName evidence="1">Ribosome-binding factor A</fullName>
    </recommendedName>
</protein>
<comment type="function">
    <text evidence="1">One of several proteins that assist in the late maturation steps of the functional core of the 30S ribosomal subunit. Associates with free 30S ribosomal subunits (but not with 30S subunits that are part of 70S ribosomes or polysomes). Required for efficient processing of 16S rRNA. May interact with the 5'-terminal helix region of 16S rRNA.</text>
</comment>
<comment type="subunit">
    <text evidence="1">Monomer. Binds 30S ribosomal subunits, but not 50S ribosomal subunits or 70S ribosomes.</text>
</comment>
<comment type="subcellular location">
    <subcellularLocation>
        <location evidence="1">Cytoplasm</location>
    </subcellularLocation>
</comment>
<comment type="similarity">
    <text evidence="1">Belongs to the RbfA family.</text>
</comment>
<comment type="sequence caution" evidence="2">
    <conflict type="erroneous initiation">
        <sequence resource="EMBL-CDS" id="ABC38985"/>
    </conflict>
    <text>Extended N-terminus.</text>
</comment>
<name>RBFA_BURTA</name>
<organism>
    <name type="scientific">Burkholderia thailandensis (strain ATCC 700388 / DSM 13276 / CCUG 48851 / CIP 106301 / E264)</name>
    <dbReference type="NCBI Taxonomy" id="271848"/>
    <lineage>
        <taxon>Bacteria</taxon>
        <taxon>Pseudomonadati</taxon>
        <taxon>Pseudomonadota</taxon>
        <taxon>Betaproteobacteria</taxon>
        <taxon>Burkholderiales</taxon>
        <taxon>Burkholderiaceae</taxon>
        <taxon>Burkholderia</taxon>
        <taxon>pseudomallei group</taxon>
    </lineage>
</organism>
<feature type="chain" id="PRO_0000321210" description="Ribosome-binding factor A">
    <location>
        <begin position="1"/>
        <end position="122"/>
    </location>
</feature>
<gene>
    <name evidence="1" type="primary">rbfA</name>
    <name type="ordered locus">BTH_I2563</name>
</gene>